<organism>
    <name type="scientific">Burkholderia mallei (strain SAVP1)</name>
    <dbReference type="NCBI Taxonomy" id="320388"/>
    <lineage>
        <taxon>Bacteria</taxon>
        <taxon>Pseudomonadati</taxon>
        <taxon>Pseudomonadota</taxon>
        <taxon>Betaproteobacteria</taxon>
        <taxon>Burkholderiales</taxon>
        <taxon>Burkholderiaceae</taxon>
        <taxon>Burkholderia</taxon>
        <taxon>pseudomallei group</taxon>
    </lineage>
</organism>
<gene>
    <name evidence="1" type="primary">ahcY</name>
    <name type="ordered locus">BMASAVP1_A3417</name>
</gene>
<feature type="chain" id="PRO_1000024716" description="Adenosylhomocysteinase">
    <location>
        <begin position="1"/>
        <end position="473"/>
    </location>
</feature>
<feature type="binding site" evidence="1">
    <location>
        <position position="64"/>
    </location>
    <ligand>
        <name>substrate</name>
    </ligand>
</feature>
<feature type="binding site" evidence="1">
    <location>
        <position position="139"/>
    </location>
    <ligand>
        <name>substrate</name>
    </ligand>
</feature>
<feature type="binding site" evidence="1">
    <location>
        <position position="199"/>
    </location>
    <ligand>
        <name>substrate</name>
    </ligand>
</feature>
<feature type="binding site" evidence="1">
    <location>
        <begin position="200"/>
        <end position="202"/>
    </location>
    <ligand>
        <name>NAD(+)</name>
        <dbReference type="ChEBI" id="CHEBI:57540"/>
    </ligand>
</feature>
<feature type="binding site" evidence="1">
    <location>
        <position position="229"/>
    </location>
    <ligand>
        <name>substrate</name>
    </ligand>
</feature>
<feature type="binding site" evidence="1">
    <location>
        <position position="233"/>
    </location>
    <ligand>
        <name>substrate</name>
    </ligand>
</feature>
<feature type="binding site" evidence="1">
    <location>
        <position position="234"/>
    </location>
    <ligand>
        <name>NAD(+)</name>
        <dbReference type="ChEBI" id="CHEBI:57540"/>
    </ligand>
</feature>
<feature type="binding site" evidence="1">
    <location>
        <begin position="263"/>
        <end position="268"/>
    </location>
    <ligand>
        <name>NAD(+)</name>
        <dbReference type="ChEBI" id="CHEBI:57540"/>
    </ligand>
</feature>
<feature type="binding site" evidence="1">
    <location>
        <position position="286"/>
    </location>
    <ligand>
        <name>NAD(+)</name>
        <dbReference type="ChEBI" id="CHEBI:57540"/>
    </ligand>
</feature>
<feature type="binding site" evidence="1">
    <location>
        <position position="321"/>
    </location>
    <ligand>
        <name>NAD(+)</name>
        <dbReference type="ChEBI" id="CHEBI:57540"/>
    </ligand>
</feature>
<feature type="binding site" evidence="1">
    <location>
        <begin position="342"/>
        <end position="344"/>
    </location>
    <ligand>
        <name>NAD(+)</name>
        <dbReference type="ChEBI" id="CHEBI:57540"/>
    </ligand>
</feature>
<feature type="binding site" evidence="1">
    <location>
        <position position="387"/>
    </location>
    <ligand>
        <name>NAD(+)</name>
        <dbReference type="ChEBI" id="CHEBI:57540"/>
    </ligand>
</feature>
<sequence length="473" mass="52201">MNAAVIDSHSAQDYVVADIALAGWGRKELNIAETEMPGLVQIRDEYKAQQPLKGARIAGSLHMTIQTGVLIETLKALGADVRWASCNIFSTQDHAAAAIVEAGTPVFAFKGESLDEYWEFSHRIFEWPNGEFANMILDDGGDATLLLILGSKAEKDRSVIARPTNEEEVALFKSIERHLEIDGSWYSKRLAHIKGVTEETTTGVHRLYQMEKDGRLPFPAFNVNDSVTKSKFDNLYGCRESLVDGIKRATDVMIAGKIAVVAGYGDVGKGCAQSLRGLGATVWVTEIDPICALQAAMEGYRVVTMEYAADKADIFVTATGNYHVINHDHMKAMRHNAIVCNIGHFDSEIDVASTRQYQWENIKPQVDHIIFPDGKRVILLAEGRLVNLGCATGHPSFVMSNSFTNQTLAQIELFTRGGEYANKVYVLPKHLDEKVARLHLARIGAQLSELSDDQAAYIGVSKAGPFKPDHYRY</sequence>
<name>SAHH_BURMS</name>
<proteinExistence type="inferred from homology"/>
<protein>
    <recommendedName>
        <fullName evidence="1">Adenosylhomocysteinase</fullName>
        <ecNumber evidence="1">3.13.2.1</ecNumber>
    </recommendedName>
    <alternativeName>
        <fullName evidence="1">S-adenosyl-L-homocysteine hydrolase</fullName>
        <shortName evidence="1">AdoHcyase</shortName>
    </alternativeName>
</protein>
<keyword id="KW-0963">Cytoplasm</keyword>
<keyword id="KW-0378">Hydrolase</keyword>
<keyword id="KW-0520">NAD</keyword>
<keyword id="KW-0554">One-carbon metabolism</keyword>
<accession>A1V8Z2</accession>
<reference key="1">
    <citation type="journal article" date="2010" name="Genome Biol. Evol.">
        <title>Continuing evolution of Burkholderia mallei through genome reduction and large-scale rearrangements.</title>
        <authorList>
            <person name="Losada L."/>
            <person name="Ronning C.M."/>
            <person name="DeShazer D."/>
            <person name="Woods D."/>
            <person name="Fedorova N."/>
            <person name="Kim H.S."/>
            <person name="Shabalina S.A."/>
            <person name="Pearson T.R."/>
            <person name="Brinkac L."/>
            <person name="Tan P."/>
            <person name="Nandi T."/>
            <person name="Crabtree J."/>
            <person name="Badger J."/>
            <person name="Beckstrom-Sternberg S."/>
            <person name="Saqib M."/>
            <person name="Schutzer S.E."/>
            <person name="Keim P."/>
            <person name="Nierman W.C."/>
        </authorList>
    </citation>
    <scope>NUCLEOTIDE SEQUENCE [LARGE SCALE GENOMIC DNA]</scope>
    <source>
        <strain>SAVP1</strain>
    </source>
</reference>
<evidence type="ECO:0000255" key="1">
    <source>
        <dbReference type="HAMAP-Rule" id="MF_00563"/>
    </source>
</evidence>
<dbReference type="EC" id="3.13.2.1" evidence="1"/>
<dbReference type="EMBL" id="CP000526">
    <property type="protein sequence ID" value="ABM50884.1"/>
    <property type="molecule type" value="Genomic_DNA"/>
</dbReference>
<dbReference type="RefSeq" id="WP_004198634.1">
    <property type="nucleotide sequence ID" value="NC_008785.1"/>
</dbReference>
<dbReference type="SMR" id="A1V8Z2"/>
<dbReference type="GeneID" id="93061911"/>
<dbReference type="KEGG" id="bmv:BMASAVP1_A3417"/>
<dbReference type="HOGENOM" id="CLU_025194_2_1_4"/>
<dbReference type="UniPathway" id="UPA00314">
    <property type="reaction ID" value="UER00076"/>
</dbReference>
<dbReference type="GO" id="GO:0005829">
    <property type="term" value="C:cytosol"/>
    <property type="evidence" value="ECO:0007669"/>
    <property type="project" value="TreeGrafter"/>
</dbReference>
<dbReference type="GO" id="GO:0004013">
    <property type="term" value="F:adenosylhomocysteinase activity"/>
    <property type="evidence" value="ECO:0007669"/>
    <property type="project" value="UniProtKB-UniRule"/>
</dbReference>
<dbReference type="GO" id="GO:0071269">
    <property type="term" value="P:L-homocysteine biosynthetic process"/>
    <property type="evidence" value="ECO:0007669"/>
    <property type="project" value="UniProtKB-UniRule"/>
</dbReference>
<dbReference type="GO" id="GO:0006730">
    <property type="term" value="P:one-carbon metabolic process"/>
    <property type="evidence" value="ECO:0007669"/>
    <property type="project" value="UniProtKB-KW"/>
</dbReference>
<dbReference type="GO" id="GO:0033353">
    <property type="term" value="P:S-adenosylmethionine cycle"/>
    <property type="evidence" value="ECO:0007669"/>
    <property type="project" value="TreeGrafter"/>
</dbReference>
<dbReference type="CDD" id="cd00401">
    <property type="entry name" value="SAHH"/>
    <property type="match status" value="1"/>
</dbReference>
<dbReference type="FunFam" id="3.40.50.720:FF:000004">
    <property type="entry name" value="Adenosylhomocysteinase"/>
    <property type="match status" value="1"/>
</dbReference>
<dbReference type="Gene3D" id="3.40.50.1480">
    <property type="entry name" value="Adenosylhomocysteinase-like"/>
    <property type="match status" value="1"/>
</dbReference>
<dbReference type="Gene3D" id="3.40.50.720">
    <property type="entry name" value="NAD(P)-binding Rossmann-like Domain"/>
    <property type="match status" value="1"/>
</dbReference>
<dbReference type="HAMAP" id="MF_00563">
    <property type="entry name" value="AdoHcyase"/>
    <property type="match status" value="1"/>
</dbReference>
<dbReference type="InterPro" id="IPR042172">
    <property type="entry name" value="Adenosylhomocyst_ase-like_sf"/>
</dbReference>
<dbReference type="InterPro" id="IPR000043">
    <property type="entry name" value="Adenosylhomocysteinase-like"/>
</dbReference>
<dbReference type="InterPro" id="IPR015878">
    <property type="entry name" value="Ado_hCys_hydrolase_NAD-bd"/>
</dbReference>
<dbReference type="InterPro" id="IPR036291">
    <property type="entry name" value="NAD(P)-bd_dom_sf"/>
</dbReference>
<dbReference type="InterPro" id="IPR020082">
    <property type="entry name" value="S-Ado-L-homoCys_hydrolase_CS"/>
</dbReference>
<dbReference type="NCBIfam" id="TIGR00936">
    <property type="entry name" value="ahcY"/>
    <property type="match status" value="1"/>
</dbReference>
<dbReference type="NCBIfam" id="NF004005">
    <property type="entry name" value="PRK05476.2-3"/>
    <property type="match status" value="1"/>
</dbReference>
<dbReference type="PANTHER" id="PTHR23420">
    <property type="entry name" value="ADENOSYLHOMOCYSTEINASE"/>
    <property type="match status" value="1"/>
</dbReference>
<dbReference type="PANTHER" id="PTHR23420:SF0">
    <property type="entry name" value="ADENOSYLHOMOCYSTEINASE"/>
    <property type="match status" value="1"/>
</dbReference>
<dbReference type="Pfam" id="PF05221">
    <property type="entry name" value="AdoHcyase"/>
    <property type="match status" value="1"/>
</dbReference>
<dbReference type="Pfam" id="PF00670">
    <property type="entry name" value="AdoHcyase_NAD"/>
    <property type="match status" value="1"/>
</dbReference>
<dbReference type="PIRSF" id="PIRSF001109">
    <property type="entry name" value="Ad_hcy_hydrolase"/>
    <property type="match status" value="1"/>
</dbReference>
<dbReference type="SMART" id="SM00996">
    <property type="entry name" value="AdoHcyase"/>
    <property type="match status" value="1"/>
</dbReference>
<dbReference type="SMART" id="SM00997">
    <property type="entry name" value="AdoHcyase_NAD"/>
    <property type="match status" value="1"/>
</dbReference>
<dbReference type="SUPFAM" id="SSF52283">
    <property type="entry name" value="Formate/glycerate dehydrogenase catalytic domain-like"/>
    <property type="match status" value="1"/>
</dbReference>
<dbReference type="SUPFAM" id="SSF51735">
    <property type="entry name" value="NAD(P)-binding Rossmann-fold domains"/>
    <property type="match status" value="1"/>
</dbReference>
<dbReference type="PROSITE" id="PS00738">
    <property type="entry name" value="ADOHCYASE_1"/>
    <property type="match status" value="1"/>
</dbReference>
<dbReference type="PROSITE" id="PS00739">
    <property type="entry name" value="ADOHCYASE_2"/>
    <property type="match status" value="1"/>
</dbReference>
<comment type="function">
    <text evidence="1">May play a key role in the regulation of the intracellular concentration of adenosylhomocysteine.</text>
</comment>
<comment type="catalytic activity">
    <reaction evidence="1">
        <text>S-adenosyl-L-homocysteine + H2O = L-homocysteine + adenosine</text>
        <dbReference type="Rhea" id="RHEA:21708"/>
        <dbReference type="ChEBI" id="CHEBI:15377"/>
        <dbReference type="ChEBI" id="CHEBI:16335"/>
        <dbReference type="ChEBI" id="CHEBI:57856"/>
        <dbReference type="ChEBI" id="CHEBI:58199"/>
        <dbReference type="EC" id="3.13.2.1"/>
    </reaction>
</comment>
<comment type="cofactor">
    <cofactor evidence="1">
        <name>NAD(+)</name>
        <dbReference type="ChEBI" id="CHEBI:57540"/>
    </cofactor>
    <text evidence="1">Binds 1 NAD(+) per subunit.</text>
</comment>
<comment type="pathway">
    <text evidence="1">Amino-acid biosynthesis; L-homocysteine biosynthesis; L-homocysteine from S-adenosyl-L-homocysteine: step 1/1.</text>
</comment>
<comment type="subcellular location">
    <subcellularLocation>
        <location evidence="1">Cytoplasm</location>
    </subcellularLocation>
</comment>
<comment type="similarity">
    <text evidence="1">Belongs to the adenosylhomocysteinase family.</text>
</comment>